<accession>Q9SIU6</accession>
<keyword id="KW-1015">Disulfide bond</keyword>
<keyword id="KW-0372">Hormone</keyword>
<keyword id="KW-1185">Reference proteome</keyword>
<keyword id="KW-0964">Secreted</keyword>
<keyword id="KW-0732">Signal</keyword>
<reference key="1">
    <citation type="journal article" date="1999" name="Nature">
        <title>Sequence and analysis of chromosome 2 of the plant Arabidopsis thaliana.</title>
        <authorList>
            <person name="Lin X."/>
            <person name="Kaul S."/>
            <person name="Rounsley S.D."/>
            <person name="Shea T.P."/>
            <person name="Benito M.-I."/>
            <person name="Town C.D."/>
            <person name="Fujii C.Y."/>
            <person name="Mason T.M."/>
            <person name="Bowman C.L."/>
            <person name="Barnstead M.E."/>
            <person name="Feldblyum T.V."/>
            <person name="Buell C.R."/>
            <person name="Ketchum K.A."/>
            <person name="Lee J.J."/>
            <person name="Ronning C.M."/>
            <person name="Koo H.L."/>
            <person name="Moffat K.S."/>
            <person name="Cronin L.A."/>
            <person name="Shen M."/>
            <person name="Pai G."/>
            <person name="Van Aken S."/>
            <person name="Umayam L."/>
            <person name="Tallon L.J."/>
            <person name="Gill J.E."/>
            <person name="Adams M.D."/>
            <person name="Carrera A.J."/>
            <person name="Creasy T.H."/>
            <person name="Goodman H.M."/>
            <person name="Somerville C.R."/>
            <person name="Copenhaver G.P."/>
            <person name="Preuss D."/>
            <person name="Nierman W.C."/>
            <person name="White O."/>
            <person name="Eisen J.A."/>
            <person name="Salzberg S.L."/>
            <person name="Fraser C.M."/>
            <person name="Venter J.C."/>
        </authorList>
    </citation>
    <scope>NUCLEOTIDE SEQUENCE [LARGE SCALE GENOMIC DNA]</scope>
    <source>
        <strain>cv. Columbia</strain>
    </source>
</reference>
<reference key="2">
    <citation type="journal article" date="2017" name="Plant J.">
        <title>Araport11: a complete reannotation of the Arabidopsis thaliana reference genome.</title>
        <authorList>
            <person name="Cheng C.Y."/>
            <person name="Krishnakumar V."/>
            <person name="Chan A.P."/>
            <person name="Thibaud-Nissen F."/>
            <person name="Schobel S."/>
            <person name="Town C.D."/>
        </authorList>
    </citation>
    <scope>GENOME REANNOTATION</scope>
    <source>
        <strain>cv. Columbia</strain>
    </source>
</reference>
<reference key="3">
    <citation type="submission" date="2005-05" db="EMBL/GenBank/DDBJ databases">
        <authorList>
            <person name="Underwood B.A."/>
            <person name="Xiao Y.-L."/>
            <person name="Moskal W.A. Jr."/>
            <person name="Monaghan E.L."/>
            <person name="Wang W."/>
            <person name="Redman J.C."/>
            <person name="Wu H.C."/>
            <person name="Utterback T."/>
            <person name="Town C.D."/>
        </authorList>
    </citation>
    <scope>NUCLEOTIDE SEQUENCE [LARGE SCALE MRNA]</scope>
    <source>
        <strain>cv. Columbia</strain>
    </source>
</reference>
<reference key="4">
    <citation type="journal article" date="2002" name="In Silico Biol.">
        <title>Peptomics, identification of novel cationic Arabidopsis peptides with conserved sequence motifs.</title>
        <authorList>
            <person name="Olsen A.N."/>
            <person name="Mundy J."/>
            <person name="Skriver K."/>
        </authorList>
    </citation>
    <scope>GENE FAMILY</scope>
    <scope>NOMENCLATURE</scope>
</reference>
<gene>
    <name type="primary">RALFL14</name>
    <name type="ordered locus">At2g20660</name>
    <name type="ORF">F23N11.2</name>
</gene>
<organism>
    <name type="scientific">Arabidopsis thaliana</name>
    <name type="common">Mouse-ear cress</name>
    <dbReference type="NCBI Taxonomy" id="3702"/>
    <lineage>
        <taxon>Eukaryota</taxon>
        <taxon>Viridiplantae</taxon>
        <taxon>Streptophyta</taxon>
        <taxon>Embryophyta</taxon>
        <taxon>Tracheophyta</taxon>
        <taxon>Spermatophyta</taxon>
        <taxon>Magnoliopsida</taxon>
        <taxon>eudicotyledons</taxon>
        <taxon>Gunneridae</taxon>
        <taxon>Pentapetalae</taxon>
        <taxon>rosids</taxon>
        <taxon>malvids</taxon>
        <taxon>Brassicales</taxon>
        <taxon>Brassicaceae</taxon>
        <taxon>Camelineae</taxon>
        <taxon>Arabidopsis</taxon>
    </lineage>
</organism>
<comment type="function">
    <text evidence="1">Cell signaling peptide that may regulate plant stress, growth, and development. Mediates a rapid alkalinization of extracellular space by mediating a transient increase in the cytoplasmic Ca(2+) concentration leading to a calcium-dependent signaling events through a cell surface receptor and a concomitant activation of some intracellular mitogen-activated protein kinases (By similarity).</text>
</comment>
<comment type="subcellular location">
    <subcellularLocation>
        <location evidence="1">Secreted</location>
    </subcellularLocation>
</comment>
<comment type="PTM">
    <text evidence="1">Proteolytically cleaved, probably by S1P, a subtilisin-like serine protease (subtilase).</text>
</comment>
<comment type="similarity">
    <text evidence="3">Belongs to the plant rapid alkalinization factor (RALF) family.</text>
</comment>
<sequence>MKLLIFAVIISVVLFPVLVSSRTIKCDQLSGKCINGEEKEIMNMRLGLDVSSRRILQASRYISYEALKKNLPDNRRGEPDQRDNPYRRSCDVHSHCYRFTN</sequence>
<name>RLF14_ARATH</name>
<feature type="signal peptide" evidence="2">
    <location>
        <begin position="1"/>
        <end position="21"/>
    </location>
</feature>
<feature type="propeptide" id="PRO_0000420305" description="Removed in mature form" evidence="1">
    <location>
        <begin position="22"/>
        <end position="56"/>
    </location>
</feature>
<feature type="chain" id="PRO_0000420306" description="Protein RALF-like 14" evidence="1">
    <location>
        <begin position="57"/>
        <end position="101"/>
    </location>
</feature>
<feature type="site" description="Required for proteolytic cleavage" evidence="1">
    <location>
        <begin position="53"/>
        <end position="54"/>
    </location>
</feature>
<feature type="disulfide bond" evidence="1">
    <location>
        <begin position="90"/>
        <end position="96"/>
    </location>
</feature>
<evidence type="ECO:0000250" key="1"/>
<evidence type="ECO:0000255" key="2"/>
<evidence type="ECO:0000305" key="3"/>
<protein>
    <recommendedName>
        <fullName>Protein RALF-like 14</fullName>
    </recommendedName>
</protein>
<dbReference type="EMBL" id="AC007048">
    <property type="protein sequence ID" value="AAD21703.1"/>
    <property type="molecule type" value="Genomic_DNA"/>
</dbReference>
<dbReference type="EMBL" id="CP002685">
    <property type="protein sequence ID" value="AEC07054.1"/>
    <property type="molecule type" value="Genomic_DNA"/>
</dbReference>
<dbReference type="EMBL" id="DQ056538">
    <property type="protein sequence ID" value="AAY78690.1"/>
    <property type="molecule type" value="mRNA"/>
</dbReference>
<dbReference type="PIR" id="G84591">
    <property type="entry name" value="G84591"/>
</dbReference>
<dbReference type="RefSeq" id="NP_179658.1">
    <property type="nucleotide sequence ID" value="NM_127630.1"/>
</dbReference>
<dbReference type="iPTMnet" id="Q9SIU6"/>
<dbReference type="PaxDb" id="3702-AT2G20660.1"/>
<dbReference type="EnsemblPlants" id="AT2G20660.1">
    <property type="protein sequence ID" value="AT2G20660.1"/>
    <property type="gene ID" value="AT2G20660"/>
</dbReference>
<dbReference type="GeneID" id="816594"/>
<dbReference type="Gramene" id="AT2G20660.1">
    <property type="protein sequence ID" value="AT2G20660.1"/>
    <property type="gene ID" value="AT2G20660"/>
</dbReference>
<dbReference type="KEGG" id="ath:AT2G20660"/>
<dbReference type="Araport" id="AT2G20660"/>
<dbReference type="TAIR" id="AT2G20660">
    <property type="gene designation" value="RALFL14"/>
</dbReference>
<dbReference type="HOGENOM" id="CLU_2295534_0_0_1"/>
<dbReference type="InParanoid" id="Q9SIU6"/>
<dbReference type="OMA" id="QGTRYIN"/>
<dbReference type="PhylomeDB" id="Q9SIU6"/>
<dbReference type="PRO" id="PR:Q9SIU6"/>
<dbReference type="Proteomes" id="UP000006548">
    <property type="component" value="Chromosome 2"/>
</dbReference>
<dbReference type="ExpressionAtlas" id="Q9SIU6">
    <property type="expression patterns" value="baseline and differential"/>
</dbReference>
<dbReference type="GO" id="GO:0048046">
    <property type="term" value="C:apoplast"/>
    <property type="evidence" value="ECO:0000250"/>
    <property type="project" value="TAIR"/>
</dbReference>
<dbReference type="GO" id="GO:0005179">
    <property type="term" value="F:hormone activity"/>
    <property type="evidence" value="ECO:0000250"/>
    <property type="project" value="UniProtKB"/>
</dbReference>
<dbReference type="GO" id="GO:0019722">
    <property type="term" value="P:calcium-mediated signaling"/>
    <property type="evidence" value="ECO:0000250"/>
    <property type="project" value="UniProtKB"/>
</dbReference>
<dbReference type="GO" id="GO:0007267">
    <property type="term" value="P:cell-cell signaling"/>
    <property type="evidence" value="ECO:0000250"/>
    <property type="project" value="TAIR"/>
</dbReference>
<dbReference type="GO" id="GO:0040008">
    <property type="term" value="P:regulation of growth"/>
    <property type="evidence" value="ECO:0007669"/>
    <property type="project" value="UniProtKB-ARBA"/>
</dbReference>
<dbReference type="InterPro" id="IPR008801">
    <property type="entry name" value="RALF"/>
</dbReference>
<dbReference type="PANTHER" id="PTHR33136:SF48">
    <property type="entry name" value="PROTEIN RALF-LIKE 14-RELATED"/>
    <property type="match status" value="1"/>
</dbReference>
<dbReference type="PANTHER" id="PTHR33136">
    <property type="entry name" value="RAPID ALKALINIZATION FACTOR-LIKE"/>
    <property type="match status" value="1"/>
</dbReference>
<dbReference type="Pfam" id="PF05498">
    <property type="entry name" value="RALF"/>
    <property type="match status" value="1"/>
</dbReference>
<proteinExistence type="inferred from homology"/>